<reference key="1">
    <citation type="journal article" date="1998" name="Mol. Microbiol.">
        <title>Structure and function of repetitive sequence elements associated with a highly polymorphic domain of the Neisseria meningitidis PilQ protein.</title>
        <authorList>
            <person name="Toenjum T."/>
            <person name="Caugant D.A."/>
            <person name="Dunham S.A."/>
            <person name="Koomey M."/>
        </authorList>
    </citation>
    <scope>NUCLEOTIDE SEQUENCE [GENOMIC DNA]</scope>
    <source>
        <strain>H44/76</strain>
    </source>
</reference>
<reference key="2">
    <citation type="journal article" date="2011" name="J. Bacteriol.">
        <title>Genome sequence of Neisseria meningitidis serogroup B strain H44/76.</title>
        <authorList>
            <person name="Piet J.R."/>
            <person name="Huis In 't Veld R.A."/>
            <person name="van Schaik B.D."/>
            <person name="van Kampen A.H."/>
            <person name="Baas F."/>
            <person name="van de Beek D."/>
            <person name="Pannekoek Y."/>
            <person name="van der Ende A."/>
        </authorList>
    </citation>
    <scope>NUCLEOTIDE SEQUENCE [LARGE SCALE GENOMIC DNA]</scope>
    <source>
        <strain>H44/76</strain>
    </source>
</reference>
<reference key="3">
    <citation type="journal article" date="2011" name="Proc. Natl. Acad. Sci. U.S.A.">
        <title>Neisseria meningitidis is structured in clades associated with restriction modification systems that modulate homologous recombination.</title>
        <authorList>
            <person name="Budroni S."/>
            <person name="Siena E."/>
            <person name="Hotopp J.C."/>
            <person name="Seib K.L."/>
            <person name="Serruto D."/>
            <person name="Nofroni C."/>
            <person name="Comanducci M."/>
            <person name="Riley D.R."/>
            <person name="Daugherty S.C."/>
            <person name="Angiuoli S.V."/>
            <person name="Covacci A."/>
            <person name="Pizza M."/>
            <person name="Rappuoli R."/>
            <person name="Moxon E.R."/>
            <person name="Tettelin H."/>
            <person name="Medini D."/>
        </authorList>
    </citation>
    <scope>NUCLEOTIDE SEQUENCE [LARGE SCALE GENOMIC DNA]</scope>
    <source>
        <strain>H44/76</strain>
    </source>
</reference>
<evidence type="ECO:0000250" key="1"/>
<evidence type="ECO:0000255" key="2"/>
<evidence type="ECO:0000256" key="3">
    <source>
        <dbReference type="SAM" id="MobiDB-lite"/>
    </source>
</evidence>
<evidence type="ECO:0000305" key="4"/>
<gene>
    <name type="primary">pilQ</name>
    <name type="ordered locus">NMBH4476_1758</name>
    <name type="ORF">NMH_1547</name>
</gene>
<name>PILQ_NEIMH</name>
<feature type="signal peptide" evidence="2">
    <location>
        <begin position="1"/>
        <end position="24"/>
    </location>
</feature>
<feature type="chain" id="PRO_0000013118" description="Type IV pilus biogenesis and competence protein PilQ">
    <location>
        <begin position="25"/>
        <end position="777"/>
    </location>
</feature>
<feature type="region of interest" description="Disordered" evidence="3">
    <location>
        <begin position="135"/>
        <end position="156"/>
    </location>
</feature>
<feature type="region of interest" description="Disordered" evidence="3">
    <location>
        <begin position="197"/>
        <end position="236"/>
    </location>
</feature>
<feature type="compositionally biased region" description="Low complexity" evidence="3">
    <location>
        <begin position="135"/>
        <end position="154"/>
    </location>
</feature>
<feature type="compositionally biased region" description="Low complexity" evidence="3">
    <location>
        <begin position="197"/>
        <end position="233"/>
    </location>
</feature>
<feature type="sequence conflict" description="In Ref. 1; AAC96097." evidence="4" ref="1">
    <original>P</original>
    <variation>S</variation>
    <location>
        <position position="214"/>
    </location>
</feature>
<feature type="sequence conflict" description="In Ref. 1; AAC96097." evidence="4" ref="1">
    <original>T</original>
    <variation>A</variation>
    <location>
        <position position="280"/>
    </location>
</feature>
<feature type="sequence conflict" description="In Ref. 1; AAC96097." evidence="4" ref="1">
    <original>N</original>
    <variation>S</variation>
    <location>
        <position position="387"/>
    </location>
</feature>
<feature type="sequence conflict" description="In Ref. 1; AAC96097." evidence="4" ref="1">
    <original>I</original>
    <variation>M</variation>
    <location>
        <position position="423"/>
    </location>
</feature>
<feature type="sequence conflict" description="In Ref. 1; AAC96097." evidence="4" ref="1">
    <original>DELLAKDKALLQAEKDIADLGALYSQNFQLKYKNVEEFRSILR</original>
    <variation>RAACQRQSLLTTGKRHCRSGRAVFPKLPIEIQKCGRIPQHPA</variation>
    <location>
        <begin position="427"/>
        <end position="469"/>
    </location>
</feature>
<feature type="sequence conflict" description="In Ref. 1; AAC96097." evidence="4" ref="1">
    <original>I</original>
    <variation>V</variation>
    <location>
        <position position="483"/>
    </location>
</feature>
<feature type="sequence conflict" description="In Ref. 1; AAC96097." evidence="4" ref="1">
    <original>K</original>
    <variation>R</variation>
    <location>
        <position position="550"/>
    </location>
</feature>
<feature type="sequence conflict" description="In Ref. 1; AAC96097." evidence="4" ref="1">
    <original>D</original>
    <variation>E</variation>
    <location>
        <position position="556"/>
    </location>
</feature>
<feature type="sequence conflict" description="In Ref. 1; AAC96097." evidence="4" ref="1">
    <original>D</original>
    <variation>G</variation>
    <location>
        <position position="571"/>
    </location>
</feature>
<feature type="sequence conflict" description="In Ref. 1; AAC96097." evidence="4" ref="1">
    <original>GAETKINLPITAAANSISLVRAIS</original>
    <variation>EAKPKSTCRLPCRKQHFAGARDF</variation>
    <location>
        <begin position="575"/>
        <end position="598"/>
    </location>
</feature>
<feature type="sequence conflict" description="In Ref. 1; AAC96097." evidence="4" ref="1">
    <original>T</original>
    <variation>P</variation>
    <location>
        <position position="615"/>
    </location>
</feature>
<feature type="sequence conflict" description="In Ref. 1; AAC96097." evidence="4" ref="1">
    <original>IAN</original>
    <variation>RSG</variation>
    <location>
        <begin position="646"/>
        <end position="648"/>
    </location>
</feature>
<feature type="sequence conflict" description="In Ref. 1; AAC96097." evidence="4" ref="1">
    <original>A</original>
    <variation>R</variation>
    <location>
        <position position="688"/>
    </location>
</feature>
<feature type="sequence conflict" description="In Ref. 1; AAC96097." evidence="4" ref="1">
    <original>GDIPVIGNLFKTRGKKTDRRELLIFITPRIMGTAGNSLRY</original>
    <variation>ATSPLSATSLKHGEKNRPPRTADFQLPPREL</variation>
    <location>
        <begin position="738"/>
        <end position="777"/>
    </location>
</feature>
<sequence>MNTKLTKIISGLFVATAAFQTASAGNITDIKVSSLPNKQKIVKVSFDKEIVNPTGFVTSSPARIALDFEQTGISMDQQVLEYADPLLSKISAAQNSSRARLVLNLNKPGQYNTEVRGNKVWIFINESDDTVSAPARPAVKAAPAAPAKQQAAAPSTKSAVSVSEPFTPAKQQAAAPFTESVVSVSAPFSPAKQQAAASAKQQAAAPAKQQAAAPAKQQAAAPAKQQAAAPAKQTNIDFRKDGKNAGIIELAALGFAGQPDISQQHDHIIVTLKNHTLPTTLQRSLDVADFKTPVQKVTLKRLNNDTQLIITTAGNWELVNKSAAPGYFTFQVLPKKQNLESGGVNNAPKTFTGRKISLDFQDVEIRTILQILAKESGMNIVASDSVNGKMTLSLKDVPWDQALDLVMQARNLDMRQQGNIVNIAPRDELLAKDKALLQAEKDIADLGALYSQNFQLKYKNVEEFRSILRLDNADTTGNRNTLISGRGSVLIDPATNTLIVTDTRSVIEKFRKLIDELDVPAQQVMIEARIVEAADGFSRDLGVKFGATGKKKLKNDTSAFGWGVNSGFGGDDKWGAETKINLPITAAANSISLVRAISSGALNLELSASESLSKTKTLANPRVLTQNRKEAKIESGYEIPFTVTSIANGGSSTNTELKKAVLGLTVTPNITPDGQIIMTVKINKDSPAQCASGNQTILCISTKNLNTQAMVENGGTLIVGGIYEEDNGNTLTKVPLLGDIPVIGNLFKTRGKKTDRRELLIFITPRIMGTAGNSLRY</sequence>
<accession>Q9ZHF3</accession>
<accession>E6MYG3</accession>
<comment type="function">
    <text evidence="1">Required for type IV pilus biogenesis and competence. Could function as a pore for exit of the pilus but also as a channel for entry of heme and antimicrobial agents and uptake of transforming DNA (By similarity).</text>
</comment>
<comment type="subunit">
    <text evidence="1">Homododecamer. Tetramer of trimer (By similarity).</text>
</comment>
<comment type="subcellular location">
    <subcellularLocation>
        <location evidence="1">Cell outer membrane</location>
        <topology evidence="1">Peripheral membrane protein</topology>
    </subcellularLocation>
</comment>
<comment type="similarity">
    <text evidence="4">Belongs to the bacterial secretin family. PilQ subfamily.</text>
</comment>
<proteinExistence type="inferred from homology"/>
<keyword id="KW-0998">Cell outer membrane</keyword>
<keyword id="KW-0178">Competence</keyword>
<keyword id="KW-0472">Membrane</keyword>
<keyword id="KW-0653">Protein transport</keyword>
<keyword id="KW-0732">Signal</keyword>
<keyword id="KW-0813">Transport</keyword>
<dbReference type="EMBL" id="AF066056">
    <property type="protein sequence ID" value="AAC96097.1"/>
    <property type="molecule type" value="Genomic_DNA"/>
</dbReference>
<dbReference type="EMBL" id="AEQZ01000037">
    <property type="protein sequence ID" value="EFV63384.1"/>
    <property type="molecule type" value="Genomic_DNA"/>
</dbReference>
<dbReference type="EMBL" id="CP002420">
    <property type="protein sequence ID" value="ADY96329.1"/>
    <property type="molecule type" value="Genomic_DNA"/>
</dbReference>
<dbReference type="RefSeq" id="WP_009348000.1">
    <property type="nucleotide sequence ID" value="NC_017516.1"/>
</dbReference>
<dbReference type="BMRB" id="Q9ZHF3"/>
<dbReference type="SMR" id="Q9ZHF3"/>
<dbReference type="TCDB" id="1.B.22.2.2">
    <property type="family name" value="the outer bacterial membrane secretin (secretin) family"/>
</dbReference>
<dbReference type="KEGG" id="nmh:NMBH4476_1758"/>
<dbReference type="PATRIC" id="fig|909420.3.peg.2335"/>
<dbReference type="HOGENOM" id="CLU_006756_0_1_4"/>
<dbReference type="Proteomes" id="UP000032707">
    <property type="component" value="Unassembled WGS sequence"/>
</dbReference>
<dbReference type="GO" id="GO:0009279">
    <property type="term" value="C:cell outer membrane"/>
    <property type="evidence" value="ECO:0007669"/>
    <property type="project" value="UniProtKB-SubCell"/>
</dbReference>
<dbReference type="GO" id="GO:0030420">
    <property type="term" value="P:establishment of competence for transformation"/>
    <property type="evidence" value="ECO:0007669"/>
    <property type="project" value="UniProtKB-KW"/>
</dbReference>
<dbReference type="GO" id="GO:0009306">
    <property type="term" value="P:protein secretion"/>
    <property type="evidence" value="ECO:0007669"/>
    <property type="project" value="InterPro"/>
</dbReference>
<dbReference type="Gene3D" id="2.60.40.3470">
    <property type="match status" value="1"/>
</dbReference>
<dbReference type="Gene3D" id="2.60.40.3500">
    <property type="match status" value="1"/>
</dbReference>
<dbReference type="Gene3D" id="3.30.1370.120">
    <property type="match status" value="1"/>
</dbReference>
<dbReference type="Gene3D" id="3.30.1370.130">
    <property type="match status" value="1"/>
</dbReference>
<dbReference type="InterPro" id="IPR021731">
    <property type="entry name" value="AMIN_dom"/>
</dbReference>
<dbReference type="InterPro" id="IPR001775">
    <property type="entry name" value="GspD/PilQ"/>
</dbReference>
<dbReference type="InterPro" id="IPR005644">
    <property type="entry name" value="NolW-like"/>
</dbReference>
<dbReference type="InterPro" id="IPR038591">
    <property type="entry name" value="NolW-like_sf"/>
</dbReference>
<dbReference type="InterPro" id="IPR013355">
    <property type="entry name" value="Pilus_4_PilQ"/>
</dbReference>
<dbReference type="InterPro" id="IPR011662">
    <property type="entry name" value="Secretin/TonB_short_N"/>
</dbReference>
<dbReference type="InterPro" id="IPR004846">
    <property type="entry name" value="T2SS/T3SS_dom"/>
</dbReference>
<dbReference type="InterPro" id="IPR004845">
    <property type="entry name" value="T2SS_GspD_CS"/>
</dbReference>
<dbReference type="InterPro" id="IPR051808">
    <property type="entry name" value="Type_IV_pilus_biogenesis"/>
</dbReference>
<dbReference type="NCBIfam" id="TIGR02515">
    <property type="entry name" value="IV_pilus_PilQ"/>
    <property type="match status" value="1"/>
</dbReference>
<dbReference type="PANTHER" id="PTHR30604:SF1">
    <property type="entry name" value="DNA UTILIZATION PROTEIN HOFQ"/>
    <property type="match status" value="1"/>
</dbReference>
<dbReference type="PANTHER" id="PTHR30604">
    <property type="entry name" value="PROTEIN TRANSPORT PROTEIN HOFQ"/>
    <property type="match status" value="1"/>
</dbReference>
<dbReference type="Pfam" id="PF11741">
    <property type="entry name" value="AMIN"/>
    <property type="match status" value="2"/>
</dbReference>
<dbReference type="Pfam" id="PF00263">
    <property type="entry name" value="Secretin"/>
    <property type="match status" value="1"/>
</dbReference>
<dbReference type="Pfam" id="PF03958">
    <property type="entry name" value="Secretin_N"/>
    <property type="match status" value="1"/>
</dbReference>
<dbReference type="Pfam" id="PF07660">
    <property type="entry name" value="STN"/>
    <property type="match status" value="1"/>
</dbReference>
<dbReference type="PRINTS" id="PR00811">
    <property type="entry name" value="BCTERIALGSPD"/>
</dbReference>
<dbReference type="SMART" id="SM00965">
    <property type="entry name" value="STN"/>
    <property type="match status" value="1"/>
</dbReference>
<dbReference type="PROSITE" id="PS00875">
    <property type="entry name" value="T2SP_D"/>
    <property type="match status" value="1"/>
</dbReference>
<protein>
    <recommendedName>
        <fullName>Type IV pilus biogenesis and competence protein PilQ</fullName>
    </recommendedName>
</protein>
<organism>
    <name type="scientific">Neisseria meningitidis serogroup B / serotype 15 (strain H44/76)</name>
    <dbReference type="NCBI Taxonomy" id="909420"/>
    <lineage>
        <taxon>Bacteria</taxon>
        <taxon>Pseudomonadati</taxon>
        <taxon>Pseudomonadota</taxon>
        <taxon>Betaproteobacteria</taxon>
        <taxon>Neisseriales</taxon>
        <taxon>Neisseriaceae</taxon>
        <taxon>Neisseria</taxon>
    </lineage>
</organism>